<proteinExistence type="inferred from homology"/>
<sequence>MATFKKFNKDKRPKRNTQSLLFKRKRFCRFTVAGVEEIDYKDIDTLRDFISENGKIIPARLTGTRAIYQRQLNTAIKRARFLAMVPYSDQHRV</sequence>
<protein>
    <recommendedName>
        <fullName evidence="1">Small ribosomal subunit protein bS18</fullName>
    </recommendedName>
    <alternativeName>
        <fullName evidence="2">30S ribosomal protein S18</fullName>
    </alternativeName>
</protein>
<name>RS18_VARPS</name>
<reference key="1">
    <citation type="journal article" date="2011" name="J. Bacteriol.">
        <title>Complete genome sequence of the metabolically versatile plant growth-promoting endophyte, Variovorax paradoxus S110.</title>
        <authorList>
            <person name="Han J.I."/>
            <person name="Choi H.K."/>
            <person name="Lee S.W."/>
            <person name="Orwin P.M."/>
            <person name="Kim J."/>
            <person name="Laroe S.L."/>
            <person name="Kim T.G."/>
            <person name="O'Neil J."/>
            <person name="Leadbetter J.R."/>
            <person name="Lee S.Y."/>
            <person name="Hur C.G."/>
            <person name="Spain J.C."/>
            <person name="Ovchinnikova G."/>
            <person name="Goodwin L."/>
            <person name="Han C."/>
        </authorList>
    </citation>
    <scope>NUCLEOTIDE SEQUENCE [LARGE SCALE GENOMIC DNA]</scope>
    <source>
        <strain>S110</strain>
    </source>
</reference>
<gene>
    <name evidence="1" type="primary">rpsR</name>
    <name type="ordered locus">Vapar_1820</name>
</gene>
<evidence type="ECO:0000255" key="1">
    <source>
        <dbReference type="HAMAP-Rule" id="MF_00270"/>
    </source>
</evidence>
<evidence type="ECO:0000305" key="2"/>
<organism>
    <name type="scientific">Variovorax paradoxus (strain S110)</name>
    <dbReference type="NCBI Taxonomy" id="543728"/>
    <lineage>
        <taxon>Bacteria</taxon>
        <taxon>Pseudomonadati</taxon>
        <taxon>Pseudomonadota</taxon>
        <taxon>Betaproteobacteria</taxon>
        <taxon>Burkholderiales</taxon>
        <taxon>Comamonadaceae</taxon>
        <taxon>Variovorax</taxon>
    </lineage>
</organism>
<accession>C5CUP2</accession>
<dbReference type="EMBL" id="CP001635">
    <property type="protein sequence ID" value="ACS18470.1"/>
    <property type="molecule type" value="Genomic_DNA"/>
</dbReference>
<dbReference type="SMR" id="C5CUP2"/>
<dbReference type="STRING" id="543728.Vapar_1820"/>
<dbReference type="KEGG" id="vap:Vapar_1820"/>
<dbReference type="eggNOG" id="COG0238">
    <property type="taxonomic scope" value="Bacteria"/>
</dbReference>
<dbReference type="HOGENOM" id="CLU_148710_0_3_4"/>
<dbReference type="OrthoDB" id="9812008at2"/>
<dbReference type="GO" id="GO:0022627">
    <property type="term" value="C:cytosolic small ribosomal subunit"/>
    <property type="evidence" value="ECO:0007669"/>
    <property type="project" value="TreeGrafter"/>
</dbReference>
<dbReference type="GO" id="GO:0070181">
    <property type="term" value="F:small ribosomal subunit rRNA binding"/>
    <property type="evidence" value="ECO:0007669"/>
    <property type="project" value="TreeGrafter"/>
</dbReference>
<dbReference type="GO" id="GO:0003735">
    <property type="term" value="F:structural constituent of ribosome"/>
    <property type="evidence" value="ECO:0007669"/>
    <property type="project" value="InterPro"/>
</dbReference>
<dbReference type="GO" id="GO:0006412">
    <property type="term" value="P:translation"/>
    <property type="evidence" value="ECO:0007669"/>
    <property type="project" value="UniProtKB-UniRule"/>
</dbReference>
<dbReference type="Gene3D" id="4.10.640.10">
    <property type="entry name" value="Ribosomal protein S18"/>
    <property type="match status" value="1"/>
</dbReference>
<dbReference type="HAMAP" id="MF_00270">
    <property type="entry name" value="Ribosomal_bS18"/>
    <property type="match status" value="1"/>
</dbReference>
<dbReference type="InterPro" id="IPR001648">
    <property type="entry name" value="Ribosomal_bS18"/>
</dbReference>
<dbReference type="InterPro" id="IPR018275">
    <property type="entry name" value="Ribosomal_bS18_CS"/>
</dbReference>
<dbReference type="InterPro" id="IPR036870">
    <property type="entry name" value="Ribosomal_bS18_sf"/>
</dbReference>
<dbReference type="NCBIfam" id="TIGR00165">
    <property type="entry name" value="S18"/>
    <property type="match status" value="1"/>
</dbReference>
<dbReference type="PANTHER" id="PTHR13479">
    <property type="entry name" value="30S RIBOSOMAL PROTEIN S18"/>
    <property type="match status" value="1"/>
</dbReference>
<dbReference type="PANTHER" id="PTHR13479:SF40">
    <property type="entry name" value="SMALL RIBOSOMAL SUBUNIT PROTEIN BS18M"/>
    <property type="match status" value="1"/>
</dbReference>
<dbReference type="Pfam" id="PF01084">
    <property type="entry name" value="Ribosomal_S18"/>
    <property type="match status" value="1"/>
</dbReference>
<dbReference type="PRINTS" id="PR00974">
    <property type="entry name" value="RIBOSOMALS18"/>
</dbReference>
<dbReference type="SUPFAM" id="SSF46911">
    <property type="entry name" value="Ribosomal protein S18"/>
    <property type="match status" value="1"/>
</dbReference>
<dbReference type="PROSITE" id="PS00057">
    <property type="entry name" value="RIBOSOMAL_S18"/>
    <property type="match status" value="1"/>
</dbReference>
<keyword id="KW-0687">Ribonucleoprotein</keyword>
<keyword id="KW-0689">Ribosomal protein</keyword>
<keyword id="KW-0694">RNA-binding</keyword>
<keyword id="KW-0699">rRNA-binding</keyword>
<comment type="function">
    <text evidence="1">Binds as a heterodimer with protein bS6 to the central domain of the 16S rRNA, where it helps stabilize the platform of the 30S subunit.</text>
</comment>
<comment type="subunit">
    <text evidence="1">Part of the 30S ribosomal subunit. Forms a tight heterodimer with protein bS6.</text>
</comment>
<comment type="similarity">
    <text evidence="1">Belongs to the bacterial ribosomal protein bS18 family.</text>
</comment>
<feature type="chain" id="PRO_1000204740" description="Small ribosomal subunit protein bS18">
    <location>
        <begin position="1"/>
        <end position="93"/>
    </location>
</feature>